<keyword id="KW-0687">Ribonucleoprotein</keyword>
<keyword id="KW-0689">Ribosomal protein</keyword>
<keyword id="KW-0694">RNA-binding</keyword>
<keyword id="KW-0699">rRNA-binding</keyword>
<accession>Q1I461</accession>
<dbReference type="EMBL" id="CT573326">
    <property type="protein sequence ID" value="CAK17575.1"/>
    <property type="molecule type" value="Genomic_DNA"/>
</dbReference>
<dbReference type="RefSeq" id="WP_011535936.1">
    <property type="nucleotide sequence ID" value="NC_008027.1"/>
</dbReference>
<dbReference type="SMR" id="Q1I461"/>
<dbReference type="STRING" id="384676.PSEEN4930"/>
<dbReference type="GeneID" id="58766370"/>
<dbReference type="KEGG" id="pen:PSEEN4930"/>
<dbReference type="eggNOG" id="COG0360">
    <property type="taxonomic scope" value="Bacteria"/>
</dbReference>
<dbReference type="HOGENOM" id="CLU_113441_6_1_6"/>
<dbReference type="OrthoDB" id="9812702at2"/>
<dbReference type="Proteomes" id="UP000000658">
    <property type="component" value="Chromosome"/>
</dbReference>
<dbReference type="GO" id="GO:0022627">
    <property type="term" value="C:cytosolic small ribosomal subunit"/>
    <property type="evidence" value="ECO:0007669"/>
    <property type="project" value="TreeGrafter"/>
</dbReference>
<dbReference type="GO" id="GO:0070181">
    <property type="term" value="F:small ribosomal subunit rRNA binding"/>
    <property type="evidence" value="ECO:0007669"/>
    <property type="project" value="TreeGrafter"/>
</dbReference>
<dbReference type="GO" id="GO:0003735">
    <property type="term" value="F:structural constituent of ribosome"/>
    <property type="evidence" value="ECO:0007669"/>
    <property type="project" value="InterPro"/>
</dbReference>
<dbReference type="GO" id="GO:0006412">
    <property type="term" value="P:translation"/>
    <property type="evidence" value="ECO:0007669"/>
    <property type="project" value="UniProtKB-UniRule"/>
</dbReference>
<dbReference type="CDD" id="cd00473">
    <property type="entry name" value="bS6"/>
    <property type="match status" value="1"/>
</dbReference>
<dbReference type="FunFam" id="3.30.70.60:FF:000003">
    <property type="entry name" value="30S ribosomal protein S6"/>
    <property type="match status" value="1"/>
</dbReference>
<dbReference type="Gene3D" id="3.30.70.60">
    <property type="match status" value="1"/>
</dbReference>
<dbReference type="HAMAP" id="MF_00360">
    <property type="entry name" value="Ribosomal_bS6"/>
    <property type="match status" value="1"/>
</dbReference>
<dbReference type="InterPro" id="IPR000529">
    <property type="entry name" value="Ribosomal_bS6"/>
</dbReference>
<dbReference type="InterPro" id="IPR020815">
    <property type="entry name" value="Ribosomal_bS6_CS"/>
</dbReference>
<dbReference type="InterPro" id="IPR035980">
    <property type="entry name" value="Ribosomal_bS6_sf"/>
</dbReference>
<dbReference type="InterPro" id="IPR020814">
    <property type="entry name" value="Ribosomal_S6_plastid/chlpt"/>
</dbReference>
<dbReference type="InterPro" id="IPR014717">
    <property type="entry name" value="Transl_elong_EF1B/ribsomal_bS6"/>
</dbReference>
<dbReference type="NCBIfam" id="TIGR00166">
    <property type="entry name" value="S6"/>
    <property type="match status" value="1"/>
</dbReference>
<dbReference type="PANTHER" id="PTHR21011">
    <property type="entry name" value="MITOCHONDRIAL 28S RIBOSOMAL PROTEIN S6"/>
    <property type="match status" value="1"/>
</dbReference>
<dbReference type="PANTHER" id="PTHR21011:SF1">
    <property type="entry name" value="SMALL RIBOSOMAL SUBUNIT PROTEIN BS6M"/>
    <property type="match status" value="1"/>
</dbReference>
<dbReference type="Pfam" id="PF01250">
    <property type="entry name" value="Ribosomal_S6"/>
    <property type="match status" value="1"/>
</dbReference>
<dbReference type="SUPFAM" id="SSF54995">
    <property type="entry name" value="Ribosomal protein S6"/>
    <property type="match status" value="1"/>
</dbReference>
<dbReference type="PROSITE" id="PS01048">
    <property type="entry name" value="RIBOSOMAL_S6"/>
    <property type="match status" value="1"/>
</dbReference>
<organism>
    <name type="scientific">Pseudomonas entomophila (strain L48)</name>
    <dbReference type="NCBI Taxonomy" id="384676"/>
    <lineage>
        <taxon>Bacteria</taxon>
        <taxon>Pseudomonadati</taxon>
        <taxon>Pseudomonadota</taxon>
        <taxon>Gammaproteobacteria</taxon>
        <taxon>Pseudomonadales</taxon>
        <taxon>Pseudomonadaceae</taxon>
        <taxon>Pseudomonas</taxon>
    </lineage>
</organism>
<sequence length="141" mass="16339">MRHYEIIFLVHPDQSEQVGGMVERYTKLIEEDGGKIHRLEDWGRRQLAYAINNVHKAHYVMLNVECTGKALAELEDNFRYNDAVIRNLVIRRDEAVTGPSEMLKAEENRSERRERRERPEHADGAEGDDSNDSDNSDNADE</sequence>
<gene>
    <name evidence="1" type="primary">rpsF</name>
    <name type="ordered locus">PSEEN4930</name>
</gene>
<evidence type="ECO:0000255" key="1">
    <source>
        <dbReference type="HAMAP-Rule" id="MF_00360"/>
    </source>
</evidence>
<evidence type="ECO:0000256" key="2">
    <source>
        <dbReference type="SAM" id="MobiDB-lite"/>
    </source>
</evidence>
<evidence type="ECO:0000305" key="3"/>
<name>RS6_PSEE4</name>
<proteinExistence type="inferred from homology"/>
<comment type="function">
    <text evidence="1">Binds together with bS18 to 16S ribosomal RNA.</text>
</comment>
<comment type="similarity">
    <text evidence="1">Belongs to the bacterial ribosomal protein bS6 family.</text>
</comment>
<reference key="1">
    <citation type="journal article" date="2006" name="Nat. Biotechnol.">
        <title>Complete genome sequence of the entomopathogenic and metabolically versatile soil bacterium Pseudomonas entomophila.</title>
        <authorList>
            <person name="Vodovar N."/>
            <person name="Vallenet D."/>
            <person name="Cruveiller S."/>
            <person name="Rouy Z."/>
            <person name="Barbe V."/>
            <person name="Acosta C."/>
            <person name="Cattolico L."/>
            <person name="Jubin C."/>
            <person name="Lajus A."/>
            <person name="Segurens B."/>
            <person name="Vacherie B."/>
            <person name="Wincker P."/>
            <person name="Weissenbach J."/>
            <person name="Lemaitre B."/>
            <person name="Medigue C."/>
            <person name="Boccard F."/>
        </authorList>
    </citation>
    <scope>NUCLEOTIDE SEQUENCE [LARGE SCALE GENOMIC DNA]</scope>
    <source>
        <strain>L48</strain>
    </source>
</reference>
<feature type="chain" id="PRO_1000005318" description="Small ribosomal subunit protein bS6">
    <location>
        <begin position="1"/>
        <end position="141"/>
    </location>
</feature>
<feature type="region of interest" description="Disordered" evidence="2">
    <location>
        <begin position="96"/>
        <end position="141"/>
    </location>
</feature>
<feature type="compositionally biased region" description="Basic and acidic residues" evidence="2">
    <location>
        <begin position="103"/>
        <end position="124"/>
    </location>
</feature>
<feature type="compositionally biased region" description="Acidic residues" evidence="2">
    <location>
        <begin position="125"/>
        <end position="141"/>
    </location>
</feature>
<protein>
    <recommendedName>
        <fullName evidence="1">Small ribosomal subunit protein bS6</fullName>
    </recommendedName>
    <alternativeName>
        <fullName evidence="3">30S ribosomal protein S6</fullName>
    </alternativeName>
</protein>